<accession>B7L7S7</accession>
<evidence type="ECO:0000255" key="1">
    <source>
        <dbReference type="HAMAP-Rule" id="MF_00795"/>
    </source>
</evidence>
<comment type="subunit">
    <text evidence="1">Homodimer.</text>
</comment>
<comment type="subcellular location">
    <subcellularLocation>
        <location evidence="1">Cytoplasm</location>
    </subcellularLocation>
</comment>
<comment type="similarity">
    <text evidence="1">Belongs to the CutC family.</text>
</comment>
<comment type="caution">
    <text evidence="1">Once thought to be involved in copper homeostasis, experiments in E.coli have shown this is not the case.</text>
</comment>
<proteinExistence type="inferred from homology"/>
<sequence>MALLEICCYSMECALTAQQNGADRVELCAAPKEGGLTPSLGVLKSVRQRVTIPVHPIIRPRGGDFCYSDGEFAAILEDVRTVRELGFPGLVTGVLDVDGNVDMPRMEKIMAAAGPLAVTFHRAFDMCANPLYTLNNLAELGIARVLTSGQKSDALQGLSKIMELIAHRDAPIIMAGAGVRAENLHHFLDAGVLEVHSSAGAWQASPMRYRNQGLSMSSDAHADEYSRYIVDGAAVAEMKGIIERHQAK</sequence>
<keyword id="KW-0963">Cytoplasm</keyword>
<keyword id="KW-1185">Reference proteome</keyword>
<organism>
    <name type="scientific">Escherichia coli (strain 55989 / EAEC)</name>
    <dbReference type="NCBI Taxonomy" id="585055"/>
    <lineage>
        <taxon>Bacteria</taxon>
        <taxon>Pseudomonadati</taxon>
        <taxon>Pseudomonadota</taxon>
        <taxon>Gammaproteobacteria</taxon>
        <taxon>Enterobacterales</taxon>
        <taxon>Enterobacteriaceae</taxon>
        <taxon>Escherichia</taxon>
    </lineage>
</organism>
<reference key="1">
    <citation type="journal article" date="2009" name="PLoS Genet.">
        <title>Organised genome dynamics in the Escherichia coli species results in highly diverse adaptive paths.</title>
        <authorList>
            <person name="Touchon M."/>
            <person name="Hoede C."/>
            <person name="Tenaillon O."/>
            <person name="Barbe V."/>
            <person name="Baeriswyl S."/>
            <person name="Bidet P."/>
            <person name="Bingen E."/>
            <person name="Bonacorsi S."/>
            <person name="Bouchier C."/>
            <person name="Bouvet O."/>
            <person name="Calteau A."/>
            <person name="Chiapello H."/>
            <person name="Clermont O."/>
            <person name="Cruveiller S."/>
            <person name="Danchin A."/>
            <person name="Diard M."/>
            <person name="Dossat C."/>
            <person name="Karoui M.E."/>
            <person name="Frapy E."/>
            <person name="Garry L."/>
            <person name="Ghigo J.M."/>
            <person name="Gilles A.M."/>
            <person name="Johnson J."/>
            <person name="Le Bouguenec C."/>
            <person name="Lescat M."/>
            <person name="Mangenot S."/>
            <person name="Martinez-Jehanne V."/>
            <person name="Matic I."/>
            <person name="Nassif X."/>
            <person name="Oztas S."/>
            <person name="Petit M.A."/>
            <person name="Pichon C."/>
            <person name="Rouy Z."/>
            <person name="Ruf C.S."/>
            <person name="Schneider D."/>
            <person name="Tourret J."/>
            <person name="Vacherie B."/>
            <person name="Vallenet D."/>
            <person name="Medigue C."/>
            <person name="Rocha E.P.C."/>
            <person name="Denamur E."/>
        </authorList>
    </citation>
    <scope>NUCLEOTIDE SEQUENCE [LARGE SCALE GENOMIC DNA]</scope>
    <source>
        <strain>55989 / EAEC</strain>
    </source>
</reference>
<name>CUTC_ECO55</name>
<protein>
    <recommendedName>
        <fullName evidence="1">PF03932 family protein CutC</fullName>
    </recommendedName>
</protein>
<gene>
    <name evidence="1" type="primary">cutC</name>
    <name type="ordered locus">EC55989_2053</name>
</gene>
<feature type="chain" id="PRO_1000148515" description="PF03932 family protein CutC">
    <location>
        <begin position="1"/>
        <end position="248"/>
    </location>
</feature>
<dbReference type="EMBL" id="CU928145">
    <property type="protein sequence ID" value="CAU97911.1"/>
    <property type="molecule type" value="Genomic_DNA"/>
</dbReference>
<dbReference type="RefSeq" id="WP_001185740.1">
    <property type="nucleotide sequence ID" value="NC_011748.1"/>
</dbReference>
<dbReference type="SMR" id="B7L7S7"/>
<dbReference type="KEGG" id="eck:EC55989_2053"/>
<dbReference type="HOGENOM" id="CLU_050555_3_1_6"/>
<dbReference type="Proteomes" id="UP000000746">
    <property type="component" value="Chromosome"/>
</dbReference>
<dbReference type="GO" id="GO:0005737">
    <property type="term" value="C:cytoplasm"/>
    <property type="evidence" value="ECO:0007669"/>
    <property type="project" value="UniProtKB-SubCell"/>
</dbReference>
<dbReference type="GO" id="GO:0005507">
    <property type="term" value="F:copper ion binding"/>
    <property type="evidence" value="ECO:0007669"/>
    <property type="project" value="TreeGrafter"/>
</dbReference>
<dbReference type="FunFam" id="3.20.20.380:FF:000001">
    <property type="entry name" value="Copper homeostasis protein CutC"/>
    <property type="match status" value="1"/>
</dbReference>
<dbReference type="Gene3D" id="3.20.20.380">
    <property type="entry name" value="Copper homeostasis (CutC) domain"/>
    <property type="match status" value="1"/>
</dbReference>
<dbReference type="HAMAP" id="MF_00795">
    <property type="entry name" value="CutC"/>
    <property type="match status" value="1"/>
</dbReference>
<dbReference type="InterPro" id="IPR005627">
    <property type="entry name" value="CutC-like"/>
</dbReference>
<dbReference type="InterPro" id="IPR036822">
    <property type="entry name" value="CutC-like_dom_sf"/>
</dbReference>
<dbReference type="NCBIfam" id="NF008603">
    <property type="entry name" value="PRK11572.1"/>
    <property type="match status" value="1"/>
</dbReference>
<dbReference type="PANTHER" id="PTHR12598">
    <property type="entry name" value="COPPER HOMEOSTASIS PROTEIN CUTC"/>
    <property type="match status" value="1"/>
</dbReference>
<dbReference type="PANTHER" id="PTHR12598:SF0">
    <property type="entry name" value="COPPER HOMEOSTASIS PROTEIN CUTC HOMOLOG"/>
    <property type="match status" value="1"/>
</dbReference>
<dbReference type="Pfam" id="PF03932">
    <property type="entry name" value="CutC"/>
    <property type="match status" value="1"/>
</dbReference>
<dbReference type="SUPFAM" id="SSF110395">
    <property type="entry name" value="CutC-like"/>
    <property type="match status" value="1"/>
</dbReference>